<keyword id="KW-0255">Endonuclease</keyword>
<keyword id="KW-0269">Exonuclease</keyword>
<keyword id="KW-0378">Hydrolase</keyword>
<keyword id="KW-0479">Metal-binding</keyword>
<keyword id="KW-0540">Nuclease</keyword>
<keyword id="KW-0819">tRNA processing</keyword>
<keyword id="KW-0862">Zinc</keyword>
<sequence length="305" mass="33064">MELIFLGTSAGVPTRSRNVTAILLDLQHPTRAGLWLFDCGEGTQHQLLHTAYHPGKLDKIFITHLHGDHVFGLPGLLCSRSMAGNVNPLTIFGPAGIREFTETALRLSGSWTDYPLEIVEVSEGVVFKDEQYTVTAGALNHPVECYGYRIEEHDKPGALDAAALIADGIKPGPLFQRLKHGDTVTLEDGRIVNGQDYLSAPQPGKKLVIFGDTAPCPAALALARNADVLVHEVTLEAAMEEKANSRGHSSTRQAAQLARDASVGKLLVTHISSRYDAQGCESLLKECRAVFPECELAQDFMQVCV</sequence>
<gene>
    <name evidence="1" type="primary">rbn</name>
    <name type="synonym">rnz</name>
    <name type="ordered locus">Ent638_2818</name>
</gene>
<protein>
    <recommendedName>
        <fullName evidence="1">Ribonuclease BN</fullName>
        <shortName evidence="1">RNase BN</shortName>
        <ecNumber evidence="1">3.1.-.-</ecNumber>
    </recommendedName>
    <alternativeName>
        <fullName evidence="1">Ribonuclease Z homolog</fullName>
        <shortName evidence="1">RNase Z homolog</shortName>
    </alternativeName>
</protein>
<proteinExistence type="inferred from homology"/>
<name>RBN_ENT38</name>
<comment type="function">
    <text evidence="1">Zinc phosphodiesterase, which has both exoribonuclease and endoribonuclease activities.</text>
</comment>
<comment type="cofactor">
    <cofactor evidence="1">
        <name>Zn(2+)</name>
        <dbReference type="ChEBI" id="CHEBI:29105"/>
    </cofactor>
    <text evidence="1">Binds 2 Zn(2+) ions.</text>
</comment>
<comment type="subunit">
    <text evidence="1">Homodimer.</text>
</comment>
<comment type="similarity">
    <text evidence="1">Belongs to the RNase Z family. RNase BN subfamily.</text>
</comment>
<dbReference type="EC" id="3.1.-.-" evidence="1"/>
<dbReference type="EMBL" id="CP000653">
    <property type="protein sequence ID" value="ABP61483.1"/>
    <property type="molecule type" value="Genomic_DNA"/>
</dbReference>
<dbReference type="RefSeq" id="WP_015959816.1">
    <property type="nucleotide sequence ID" value="NC_009436.1"/>
</dbReference>
<dbReference type="SMR" id="A4WCQ3"/>
<dbReference type="STRING" id="399742.Ent638_2818"/>
<dbReference type="KEGG" id="ent:Ent638_2818"/>
<dbReference type="eggNOG" id="COG1234">
    <property type="taxonomic scope" value="Bacteria"/>
</dbReference>
<dbReference type="HOGENOM" id="CLU_031317_2_0_6"/>
<dbReference type="OrthoDB" id="9803916at2"/>
<dbReference type="Proteomes" id="UP000000230">
    <property type="component" value="Chromosome"/>
</dbReference>
<dbReference type="GO" id="GO:0042781">
    <property type="term" value="F:3'-tRNA processing endoribonuclease activity"/>
    <property type="evidence" value="ECO:0007669"/>
    <property type="project" value="TreeGrafter"/>
</dbReference>
<dbReference type="GO" id="GO:0004527">
    <property type="term" value="F:exonuclease activity"/>
    <property type="evidence" value="ECO:0007669"/>
    <property type="project" value="UniProtKB-UniRule"/>
</dbReference>
<dbReference type="GO" id="GO:0008270">
    <property type="term" value="F:zinc ion binding"/>
    <property type="evidence" value="ECO:0007669"/>
    <property type="project" value="UniProtKB-UniRule"/>
</dbReference>
<dbReference type="CDD" id="cd07717">
    <property type="entry name" value="RNaseZ_ZiPD-like_MBL-fold"/>
    <property type="match status" value="1"/>
</dbReference>
<dbReference type="FunFam" id="3.60.15.10:FF:000002">
    <property type="entry name" value="Ribonuclease Z"/>
    <property type="match status" value="1"/>
</dbReference>
<dbReference type="Gene3D" id="3.60.15.10">
    <property type="entry name" value="Ribonuclease Z/Hydroxyacylglutathione hydrolase-like"/>
    <property type="match status" value="1"/>
</dbReference>
<dbReference type="HAMAP" id="MF_01818">
    <property type="entry name" value="RNase_Z_BN"/>
    <property type="match status" value="1"/>
</dbReference>
<dbReference type="InterPro" id="IPR001279">
    <property type="entry name" value="Metallo-B-lactamas"/>
</dbReference>
<dbReference type="InterPro" id="IPR036866">
    <property type="entry name" value="RibonucZ/Hydroxyglut_hydro"/>
</dbReference>
<dbReference type="InterPro" id="IPR013471">
    <property type="entry name" value="RNase_Z/BN"/>
</dbReference>
<dbReference type="NCBIfam" id="NF000800">
    <property type="entry name" value="PRK00055.1-1"/>
    <property type="match status" value="1"/>
</dbReference>
<dbReference type="NCBIfam" id="NF000801">
    <property type="entry name" value="PRK00055.1-3"/>
    <property type="match status" value="1"/>
</dbReference>
<dbReference type="NCBIfam" id="TIGR02651">
    <property type="entry name" value="RNase_Z"/>
    <property type="match status" value="1"/>
</dbReference>
<dbReference type="PANTHER" id="PTHR46018">
    <property type="entry name" value="ZINC PHOSPHODIESTERASE ELAC PROTEIN 1"/>
    <property type="match status" value="1"/>
</dbReference>
<dbReference type="PANTHER" id="PTHR46018:SF2">
    <property type="entry name" value="ZINC PHOSPHODIESTERASE ELAC PROTEIN 1"/>
    <property type="match status" value="1"/>
</dbReference>
<dbReference type="Pfam" id="PF12706">
    <property type="entry name" value="Lactamase_B_2"/>
    <property type="match status" value="2"/>
</dbReference>
<dbReference type="SUPFAM" id="SSF56281">
    <property type="entry name" value="Metallo-hydrolase/oxidoreductase"/>
    <property type="match status" value="1"/>
</dbReference>
<reference key="1">
    <citation type="journal article" date="2010" name="PLoS Genet.">
        <title>Genome sequence of the plant growth promoting endophytic bacterium Enterobacter sp. 638.</title>
        <authorList>
            <person name="Taghavi S."/>
            <person name="van der Lelie D."/>
            <person name="Hoffman A."/>
            <person name="Zhang Y.B."/>
            <person name="Walla M.D."/>
            <person name="Vangronsveld J."/>
            <person name="Newman L."/>
            <person name="Monchy S."/>
        </authorList>
    </citation>
    <scope>NUCLEOTIDE SEQUENCE [LARGE SCALE GENOMIC DNA]</scope>
    <source>
        <strain>638</strain>
    </source>
</reference>
<feature type="chain" id="PRO_1000070280" description="Ribonuclease BN">
    <location>
        <begin position="1"/>
        <end position="305"/>
    </location>
</feature>
<feature type="active site" description="Proton acceptor" evidence="1">
    <location>
        <position position="68"/>
    </location>
</feature>
<feature type="binding site" evidence="1">
    <location>
        <position position="64"/>
    </location>
    <ligand>
        <name>Zn(2+)</name>
        <dbReference type="ChEBI" id="CHEBI:29105"/>
        <label>1</label>
        <note>catalytic</note>
    </ligand>
</feature>
<feature type="binding site" evidence="1">
    <location>
        <position position="66"/>
    </location>
    <ligand>
        <name>Zn(2+)</name>
        <dbReference type="ChEBI" id="CHEBI:29105"/>
        <label>1</label>
        <note>catalytic</note>
    </ligand>
</feature>
<feature type="binding site" evidence="1">
    <location>
        <position position="68"/>
    </location>
    <ligand>
        <name>Zn(2+)</name>
        <dbReference type="ChEBI" id="CHEBI:29105"/>
        <label>2</label>
        <note>catalytic</note>
    </ligand>
</feature>
<feature type="binding site" evidence="1">
    <location>
        <position position="69"/>
    </location>
    <ligand>
        <name>Zn(2+)</name>
        <dbReference type="ChEBI" id="CHEBI:29105"/>
        <label>2</label>
        <note>catalytic</note>
    </ligand>
</feature>
<feature type="binding site" evidence="1">
    <location>
        <position position="141"/>
    </location>
    <ligand>
        <name>Zn(2+)</name>
        <dbReference type="ChEBI" id="CHEBI:29105"/>
        <label>1</label>
        <note>catalytic</note>
    </ligand>
</feature>
<feature type="binding site" evidence="1">
    <location>
        <position position="212"/>
    </location>
    <ligand>
        <name>Zn(2+)</name>
        <dbReference type="ChEBI" id="CHEBI:29105"/>
        <label>1</label>
        <note>catalytic</note>
    </ligand>
</feature>
<feature type="binding site" evidence="1">
    <location>
        <position position="212"/>
    </location>
    <ligand>
        <name>Zn(2+)</name>
        <dbReference type="ChEBI" id="CHEBI:29105"/>
        <label>2</label>
        <note>catalytic</note>
    </ligand>
</feature>
<feature type="binding site" evidence="1">
    <location>
        <position position="270"/>
    </location>
    <ligand>
        <name>Zn(2+)</name>
        <dbReference type="ChEBI" id="CHEBI:29105"/>
        <label>2</label>
        <note>catalytic</note>
    </ligand>
</feature>
<accession>A4WCQ3</accession>
<evidence type="ECO:0000255" key="1">
    <source>
        <dbReference type="HAMAP-Rule" id="MF_01818"/>
    </source>
</evidence>
<organism>
    <name type="scientific">Enterobacter sp. (strain 638)</name>
    <dbReference type="NCBI Taxonomy" id="399742"/>
    <lineage>
        <taxon>Bacteria</taxon>
        <taxon>Pseudomonadati</taxon>
        <taxon>Pseudomonadota</taxon>
        <taxon>Gammaproteobacteria</taxon>
        <taxon>Enterobacterales</taxon>
        <taxon>Enterobacteriaceae</taxon>
        <taxon>Enterobacter</taxon>
    </lineage>
</organism>